<gene>
    <name evidence="1" type="primary">miaA</name>
    <name type="ordered locus">MGAS9429_Spy0779</name>
</gene>
<evidence type="ECO:0000255" key="1">
    <source>
        <dbReference type="HAMAP-Rule" id="MF_00185"/>
    </source>
</evidence>
<organism>
    <name type="scientific">Streptococcus pyogenes serotype M12 (strain MGAS9429)</name>
    <dbReference type="NCBI Taxonomy" id="370551"/>
    <lineage>
        <taxon>Bacteria</taxon>
        <taxon>Bacillati</taxon>
        <taxon>Bacillota</taxon>
        <taxon>Bacilli</taxon>
        <taxon>Lactobacillales</taxon>
        <taxon>Streptococcaceae</taxon>
        <taxon>Streptococcus</taxon>
    </lineage>
</organism>
<proteinExistence type="inferred from homology"/>
<keyword id="KW-0067">ATP-binding</keyword>
<keyword id="KW-0460">Magnesium</keyword>
<keyword id="KW-0547">Nucleotide-binding</keyword>
<keyword id="KW-0808">Transferase</keyword>
<keyword id="KW-0819">tRNA processing</keyword>
<name>MIAA_STRPC</name>
<comment type="function">
    <text evidence="1">Catalyzes the transfer of a dimethylallyl group onto the adenine at position 37 in tRNAs that read codons beginning with uridine, leading to the formation of N6-(dimethylallyl)adenosine (i(6)A).</text>
</comment>
<comment type="catalytic activity">
    <reaction evidence="1">
        <text>adenosine(37) in tRNA + dimethylallyl diphosphate = N(6)-dimethylallyladenosine(37) in tRNA + diphosphate</text>
        <dbReference type="Rhea" id="RHEA:26482"/>
        <dbReference type="Rhea" id="RHEA-COMP:10162"/>
        <dbReference type="Rhea" id="RHEA-COMP:10375"/>
        <dbReference type="ChEBI" id="CHEBI:33019"/>
        <dbReference type="ChEBI" id="CHEBI:57623"/>
        <dbReference type="ChEBI" id="CHEBI:74411"/>
        <dbReference type="ChEBI" id="CHEBI:74415"/>
        <dbReference type="EC" id="2.5.1.75"/>
    </reaction>
</comment>
<comment type="cofactor">
    <cofactor evidence="1">
        <name>Mg(2+)</name>
        <dbReference type="ChEBI" id="CHEBI:18420"/>
    </cofactor>
</comment>
<comment type="subunit">
    <text evidence="1">Monomer.</text>
</comment>
<comment type="similarity">
    <text evidence="1">Belongs to the IPP transferase family.</text>
</comment>
<reference key="1">
    <citation type="journal article" date="2006" name="Proc. Natl. Acad. Sci. U.S.A.">
        <title>Molecular genetic anatomy of inter- and intraserotype variation in the human bacterial pathogen group A Streptococcus.</title>
        <authorList>
            <person name="Beres S.B."/>
            <person name="Richter E.W."/>
            <person name="Nagiec M.J."/>
            <person name="Sumby P."/>
            <person name="Porcella S.F."/>
            <person name="DeLeo F.R."/>
            <person name="Musser J.M."/>
        </authorList>
    </citation>
    <scope>NUCLEOTIDE SEQUENCE [LARGE SCALE GENOMIC DNA]</scope>
    <source>
        <strain>MGAS9429</strain>
    </source>
</reference>
<accession>Q1JM45</accession>
<dbReference type="EC" id="2.5.1.75" evidence="1"/>
<dbReference type="EMBL" id="CP000259">
    <property type="protein sequence ID" value="ABF31967.1"/>
    <property type="molecule type" value="Genomic_DNA"/>
</dbReference>
<dbReference type="RefSeq" id="WP_002990117.1">
    <property type="nucleotide sequence ID" value="NC_008021.1"/>
</dbReference>
<dbReference type="SMR" id="Q1JM45"/>
<dbReference type="KEGG" id="spk:MGAS9429_Spy0779"/>
<dbReference type="HOGENOM" id="CLU_032616_0_1_9"/>
<dbReference type="Proteomes" id="UP000002433">
    <property type="component" value="Chromosome"/>
</dbReference>
<dbReference type="GO" id="GO:0005524">
    <property type="term" value="F:ATP binding"/>
    <property type="evidence" value="ECO:0007669"/>
    <property type="project" value="UniProtKB-UniRule"/>
</dbReference>
<dbReference type="GO" id="GO:0052381">
    <property type="term" value="F:tRNA dimethylallyltransferase activity"/>
    <property type="evidence" value="ECO:0007669"/>
    <property type="project" value="UniProtKB-UniRule"/>
</dbReference>
<dbReference type="GO" id="GO:0006400">
    <property type="term" value="P:tRNA modification"/>
    <property type="evidence" value="ECO:0007669"/>
    <property type="project" value="TreeGrafter"/>
</dbReference>
<dbReference type="Gene3D" id="3.40.50.300">
    <property type="entry name" value="P-loop containing nucleotide triphosphate hydrolases"/>
    <property type="match status" value="1"/>
</dbReference>
<dbReference type="HAMAP" id="MF_00185">
    <property type="entry name" value="IPP_trans"/>
    <property type="match status" value="1"/>
</dbReference>
<dbReference type="InterPro" id="IPR039657">
    <property type="entry name" value="Dimethylallyltransferase"/>
</dbReference>
<dbReference type="InterPro" id="IPR018022">
    <property type="entry name" value="IPT"/>
</dbReference>
<dbReference type="InterPro" id="IPR027417">
    <property type="entry name" value="P-loop_NTPase"/>
</dbReference>
<dbReference type="NCBIfam" id="TIGR00174">
    <property type="entry name" value="miaA"/>
    <property type="match status" value="1"/>
</dbReference>
<dbReference type="PANTHER" id="PTHR11088">
    <property type="entry name" value="TRNA DIMETHYLALLYLTRANSFERASE"/>
    <property type="match status" value="1"/>
</dbReference>
<dbReference type="PANTHER" id="PTHR11088:SF60">
    <property type="entry name" value="TRNA DIMETHYLALLYLTRANSFERASE"/>
    <property type="match status" value="1"/>
</dbReference>
<dbReference type="Pfam" id="PF01715">
    <property type="entry name" value="IPPT"/>
    <property type="match status" value="1"/>
</dbReference>
<dbReference type="SUPFAM" id="SSF52540">
    <property type="entry name" value="P-loop containing nucleoside triphosphate hydrolases"/>
    <property type="match status" value="2"/>
</dbReference>
<sequence>MTKIKIVVIVGPTAVGKTALGISLAKAFNGEIISGDSQQVYRQLDIGTAKATQEEQEAAVHHLIDIREVTESYSAYDFVQDAQKAISDIVSRGKLPIIVGGTGLYLQSLLEGYHLGGQVDQEAVKAYRNELEQLDDHDLYERLQVNNITIEQVNRRRAIRALELAQFADELENAETAYEPLIIGLNDDRQVIYDRINQRVNRMLENGLLEEAKWLYEHYPTVQASRGIGYKELFPYFVGEMTLAEASDQLKQNTRRFAKRQLTWFRNRMAVSFTAITAPDYPQVVHDRVRDFLGQKEKS</sequence>
<feature type="chain" id="PRO_1000020669" description="tRNA dimethylallyltransferase">
    <location>
        <begin position="1"/>
        <end position="299"/>
    </location>
</feature>
<feature type="region of interest" description="Interaction with substrate tRNA" evidence="1">
    <location>
        <begin position="36"/>
        <end position="39"/>
    </location>
</feature>
<feature type="binding site" evidence="1">
    <location>
        <begin position="11"/>
        <end position="18"/>
    </location>
    <ligand>
        <name>ATP</name>
        <dbReference type="ChEBI" id="CHEBI:30616"/>
    </ligand>
</feature>
<feature type="binding site" evidence="1">
    <location>
        <begin position="13"/>
        <end position="18"/>
    </location>
    <ligand>
        <name>substrate</name>
    </ligand>
</feature>
<feature type="site" description="Interaction with substrate tRNA" evidence="1">
    <location>
        <position position="102"/>
    </location>
</feature>
<feature type="site" description="Interaction with substrate tRNA" evidence="1">
    <location>
        <position position="128"/>
    </location>
</feature>
<protein>
    <recommendedName>
        <fullName evidence="1">tRNA dimethylallyltransferase</fullName>
        <ecNumber evidence="1">2.5.1.75</ecNumber>
    </recommendedName>
    <alternativeName>
        <fullName evidence="1">Dimethylallyl diphosphate:tRNA dimethylallyltransferase</fullName>
        <shortName evidence="1">DMAPP:tRNA dimethylallyltransferase</shortName>
        <shortName evidence="1">DMATase</shortName>
    </alternativeName>
    <alternativeName>
        <fullName evidence="1">Isopentenyl-diphosphate:tRNA isopentenyltransferase</fullName>
        <shortName evidence="1">IPP transferase</shortName>
        <shortName evidence="1">IPPT</shortName>
        <shortName evidence="1">IPTase</shortName>
    </alternativeName>
</protein>